<keyword id="KW-0008">Acetylcholine receptor inhibiting toxin</keyword>
<keyword id="KW-0903">Direct protein sequencing</keyword>
<keyword id="KW-1015">Disulfide bond</keyword>
<keyword id="KW-0872">Ion channel impairing toxin</keyword>
<keyword id="KW-0528">Neurotoxin</keyword>
<keyword id="KW-0629">Postsynaptic neurotoxin</keyword>
<keyword id="KW-0964">Secreted</keyword>
<keyword id="KW-0800">Toxin</keyword>
<dbReference type="SMR" id="P0C8R6"/>
<dbReference type="GO" id="GO:0005576">
    <property type="term" value="C:extracellular region"/>
    <property type="evidence" value="ECO:0007669"/>
    <property type="project" value="UniProtKB-SubCell"/>
</dbReference>
<dbReference type="GO" id="GO:0030550">
    <property type="term" value="F:acetylcholine receptor inhibitor activity"/>
    <property type="evidence" value="ECO:0007669"/>
    <property type="project" value="UniProtKB-KW"/>
</dbReference>
<dbReference type="GO" id="GO:0099106">
    <property type="term" value="F:ion channel regulator activity"/>
    <property type="evidence" value="ECO:0007669"/>
    <property type="project" value="UniProtKB-KW"/>
</dbReference>
<dbReference type="GO" id="GO:0090729">
    <property type="term" value="F:toxin activity"/>
    <property type="evidence" value="ECO:0007669"/>
    <property type="project" value="UniProtKB-KW"/>
</dbReference>
<dbReference type="CDD" id="cd00206">
    <property type="entry name" value="TFP_snake_toxin"/>
    <property type="match status" value="1"/>
</dbReference>
<dbReference type="Gene3D" id="2.10.60.10">
    <property type="entry name" value="CD59"/>
    <property type="match status" value="1"/>
</dbReference>
<dbReference type="InterPro" id="IPR003571">
    <property type="entry name" value="Snake_3FTx"/>
</dbReference>
<dbReference type="InterPro" id="IPR045860">
    <property type="entry name" value="Snake_toxin-like_sf"/>
</dbReference>
<dbReference type="InterPro" id="IPR018354">
    <property type="entry name" value="Snake_toxin_con_site"/>
</dbReference>
<dbReference type="InterPro" id="IPR054131">
    <property type="entry name" value="Toxin_cobra-type"/>
</dbReference>
<dbReference type="Pfam" id="PF21947">
    <property type="entry name" value="Toxin_cobra-type"/>
    <property type="match status" value="1"/>
</dbReference>
<dbReference type="SUPFAM" id="SSF57302">
    <property type="entry name" value="Snake toxin-like"/>
    <property type="match status" value="1"/>
</dbReference>
<dbReference type="PROSITE" id="PS00272">
    <property type="entry name" value="SNAKE_TOXIN"/>
    <property type="match status" value="1"/>
</dbReference>
<comment type="function">
    <text evidence="2">Binds with high affinity to muscular nicotinic acetylcholine receptors (nAChRs), whereas it binds with a low affinity to neuronal alpha-7/CHRNA7 nAChRs.</text>
</comment>
<comment type="subcellular location">
    <subcellularLocation>
        <location>Secreted</location>
    </subcellularLocation>
</comment>
<comment type="tissue specificity">
    <text>Expressed by the venom gland.</text>
</comment>
<comment type="miscellaneous">
    <text>Has the length of long neurotoxins, but only 4 disulfide bonds instead of the 5 usually present in long neurotoxins. This may explain why this toxin has the low affinity to alpha-7 nAChRs of short neurotoxins, which have only 4 disulfide bonds.</text>
</comment>
<comment type="similarity">
    <text evidence="3">Belongs to the three-finger toxin family. Long-chain subfamily. Type II alpha-neurotoxin sub-subfamily.</text>
</comment>
<organism>
    <name type="scientific">Laticauda colubrina</name>
    <name type="common">Yellow-lipped sea krait</name>
    <name type="synonym">Banded sea krait</name>
    <dbReference type="NCBI Taxonomy" id="8628"/>
    <lineage>
        <taxon>Eukaryota</taxon>
        <taxon>Metazoa</taxon>
        <taxon>Chordata</taxon>
        <taxon>Craniata</taxon>
        <taxon>Vertebrata</taxon>
        <taxon>Euteleostomi</taxon>
        <taxon>Lepidosauria</taxon>
        <taxon>Squamata</taxon>
        <taxon>Bifurcata</taxon>
        <taxon>Unidentata</taxon>
        <taxon>Episquamata</taxon>
        <taxon>Toxicofera</taxon>
        <taxon>Serpentes</taxon>
        <taxon>Colubroidea</taxon>
        <taxon>Elapidae</taxon>
        <taxon>Laticaudinae</taxon>
        <taxon>Laticauda</taxon>
    </lineage>
</organism>
<reference key="1">
    <citation type="journal article" date="1997" name="J. Biol. Chem.">
        <title>Only snake curaremimetic toxins with a fifth disulfide bond have high affinity for the neuronal alpha7 nicotinic receptor.</title>
        <authorList>
            <person name="Servent D."/>
            <person name="Winckler-Dietrich V."/>
            <person name="Hu H.-Y."/>
            <person name="Kessler P."/>
            <person name="Drevet P."/>
            <person name="Bertrand D."/>
            <person name="Menez A."/>
        </authorList>
    </citation>
    <scope>PROTEIN SEQUENCE</scope>
    <scope>FUNCTION</scope>
    <scope>SUBCELLULAR LOCATION</scope>
    <source>
        <tissue>Venom</tissue>
    </source>
</reference>
<name>3L21_LATCO</name>
<evidence type="ECO:0000250" key="1"/>
<evidence type="ECO:0000269" key="2">
    <source>
    </source>
</evidence>
<evidence type="ECO:0000305" key="3"/>
<feature type="chain" id="PRO_0000364183" description="Alpha-elapitoxin-Lc2c">
    <location>
        <begin position="1"/>
        <end position="69"/>
    </location>
</feature>
<feature type="disulfide bond" evidence="1">
    <location>
        <begin position="3"/>
        <end position="20"/>
    </location>
</feature>
<feature type="disulfide bond" evidence="1">
    <location>
        <begin position="13"/>
        <end position="41"/>
    </location>
</feature>
<feature type="disulfide bond" evidence="1">
    <location>
        <begin position="45"/>
        <end position="56"/>
    </location>
</feature>
<feature type="disulfide bond" evidence="1">
    <location>
        <begin position="57"/>
        <end position="62"/>
    </location>
</feature>
<proteinExistence type="evidence at protein level"/>
<sequence>RICYLAPRDTQICAPGQEICYLKSWDDGSGSIKGKRLEFGCAATCPTVKPGIDIKCCSTDKCNPHPKLA</sequence>
<accession>P0C8R6</accession>
<protein>
    <recommendedName>
        <fullName>Alpha-elapitoxin-Lc2c</fullName>
        <shortName>Alpha-EPTX-Lc2c</shortName>
    </recommendedName>
    <alternativeName>
        <fullName>Long neurotoxin 1</fullName>
    </alternativeName>
</protein>